<feature type="chain" id="PRO_1000142284" description="Large ribosomal subunit protein uL22">
    <location>
        <begin position="1"/>
        <end position="127"/>
    </location>
</feature>
<accession>B0UHW4</accession>
<proteinExistence type="inferred from homology"/>
<evidence type="ECO:0000255" key="1">
    <source>
        <dbReference type="HAMAP-Rule" id="MF_01331"/>
    </source>
</evidence>
<evidence type="ECO:0000305" key="2"/>
<protein>
    <recommendedName>
        <fullName evidence="1">Large ribosomal subunit protein uL22</fullName>
    </recommendedName>
    <alternativeName>
        <fullName evidence="2">50S ribosomal protein L22</fullName>
    </alternativeName>
</protein>
<sequence length="127" mass="13930">MGKAAAPRALPENEAKAVARMLRVSPQKLNLVAQLIRGKKVANALADLQFSRKRIAVEVRKCLESAIANAENNHDLDVDDLVVKEAYVGKALVLKRFHARARGRGARILKPFANLTIVVREVRAEAA</sequence>
<reference key="1">
    <citation type="submission" date="2008-02" db="EMBL/GenBank/DDBJ databases">
        <title>Complete sequence of chromosome of Methylobacterium sp. 4-46.</title>
        <authorList>
            <consortium name="US DOE Joint Genome Institute"/>
            <person name="Copeland A."/>
            <person name="Lucas S."/>
            <person name="Lapidus A."/>
            <person name="Glavina del Rio T."/>
            <person name="Dalin E."/>
            <person name="Tice H."/>
            <person name="Bruce D."/>
            <person name="Goodwin L."/>
            <person name="Pitluck S."/>
            <person name="Chertkov O."/>
            <person name="Brettin T."/>
            <person name="Detter J.C."/>
            <person name="Han C."/>
            <person name="Kuske C.R."/>
            <person name="Schmutz J."/>
            <person name="Larimer F."/>
            <person name="Land M."/>
            <person name="Hauser L."/>
            <person name="Kyrpides N."/>
            <person name="Ivanova N."/>
            <person name="Marx C.J."/>
            <person name="Richardson P."/>
        </authorList>
    </citation>
    <scope>NUCLEOTIDE SEQUENCE [LARGE SCALE GENOMIC DNA]</scope>
    <source>
        <strain>4-46</strain>
    </source>
</reference>
<keyword id="KW-0687">Ribonucleoprotein</keyword>
<keyword id="KW-0689">Ribosomal protein</keyword>
<keyword id="KW-0694">RNA-binding</keyword>
<keyword id="KW-0699">rRNA-binding</keyword>
<name>RL22_METS4</name>
<dbReference type="EMBL" id="CP000943">
    <property type="protein sequence ID" value="ACA14919.1"/>
    <property type="molecule type" value="Genomic_DNA"/>
</dbReference>
<dbReference type="RefSeq" id="WP_012330337.1">
    <property type="nucleotide sequence ID" value="NC_010511.1"/>
</dbReference>
<dbReference type="SMR" id="B0UHW4"/>
<dbReference type="STRING" id="426117.M446_0348"/>
<dbReference type="KEGG" id="met:M446_0348"/>
<dbReference type="eggNOG" id="COG0091">
    <property type="taxonomic scope" value="Bacteria"/>
</dbReference>
<dbReference type="HOGENOM" id="CLU_083987_3_0_5"/>
<dbReference type="GO" id="GO:0022625">
    <property type="term" value="C:cytosolic large ribosomal subunit"/>
    <property type="evidence" value="ECO:0007669"/>
    <property type="project" value="TreeGrafter"/>
</dbReference>
<dbReference type="GO" id="GO:0019843">
    <property type="term" value="F:rRNA binding"/>
    <property type="evidence" value="ECO:0007669"/>
    <property type="project" value="UniProtKB-UniRule"/>
</dbReference>
<dbReference type="GO" id="GO:0003735">
    <property type="term" value="F:structural constituent of ribosome"/>
    <property type="evidence" value="ECO:0007669"/>
    <property type="project" value="InterPro"/>
</dbReference>
<dbReference type="GO" id="GO:0006412">
    <property type="term" value="P:translation"/>
    <property type="evidence" value="ECO:0007669"/>
    <property type="project" value="UniProtKB-UniRule"/>
</dbReference>
<dbReference type="CDD" id="cd00336">
    <property type="entry name" value="Ribosomal_L22"/>
    <property type="match status" value="1"/>
</dbReference>
<dbReference type="Gene3D" id="3.90.470.10">
    <property type="entry name" value="Ribosomal protein L22/L17"/>
    <property type="match status" value="1"/>
</dbReference>
<dbReference type="HAMAP" id="MF_01331_B">
    <property type="entry name" value="Ribosomal_uL22_B"/>
    <property type="match status" value="1"/>
</dbReference>
<dbReference type="InterPro" id="IPR001063">
    <property type="entry name" value="Ribosomal_uL22"/>
</dbReference>
<dbReference type="InterPro" id="IPR005727">
    <property type="entry name" value="Ribosomal_uL22_bac/chlpt-type"/>
</dbReference>
<dbReference type="InterPro" id="IPR047867">
    <property type="entry name" value="Ribosomal_uL22_bac/org-type"/>
</dbReference>
<dbReference type="InterPro" id="IPR018260">
    <property type="entry name" value="Ribosomal_uL22_CS"/>
</dbReference>
<dbReference type="InterPro" id="IPR036394">
    <property type="entry name" value="Ribosomal_uL22_sf"/>
</dbReference>
<dbReference type="NCBIfam" id="TIGR01044">
    <property type="entry name" value="rplV_bact"/>
    <property type="match status" value="1"/>
</dbReference>
<dbReference type="PANTHER" id="PTHR13501">
    <property type="entry name" value="CHLOROPLAST 50S RIBOSOMAL PROTEIN L22-RELATED"/>
    <property type="match status" value="1"/>
</dbReference>
<dbReference type="PANTHER" id="PTHR13501:SF8">
    <property type="entry name" value="LARGE RIBOSOMAL SUBUNIT PROTEIN UL22M"/>
    <property type="match status" value="1"/>
</dbReference>
<dbReference type="Pfam" id="PF00237">
    <property type="entry name" value="Ribosomal_L22"/>
    <property type="match status" value="1"/>
</dbReference>
<dbReference type="SUPFAM" id="SSF54843">
    <property type="entry name" value="Ribosomal protein L22"/>
    <property type="match status" value="1"/>
</dbReference>
<dbReference type="PROSITE" id="PS00464">
    <property type="entry name" value="RIBOSOMAL_L22"/>
    <property type="match status" value="1"/>
</dbReference>
<organism>
    <name type="scientific">Methylobacterium sp. (strain 4-46)</name>
    <dbReference type="NCBI Taxonomy" id="426117"/>
    <lineage>
        <taxon>Bacteria</taxon>
        <taxon>Pseudomonadati</taxon>
        <taxon>Pseudomonadota</taxon>
        <taxon>Alphaproteobacteria</taxon>
        <taxon>Hyphomicrobiales</taxon>
        <taxon>Methylobacteriaceae</taxon>
        <taxon>Methylobacterium</taxon>
    </lineage>
</organism>
<gene>
    <name evidence="1" type="primary">rplV</name>
    <name type="ordered locus">M446_0348</name>
</gene>
<comment type="function">
    <text evidence="1">This protein binds specifically to 23S rRNA; its binding is stimulated by other ribosomal proteins, e.g. L4, L17, and L20. It is important during the early stages of 50S assembly. It makes multiple contacts with different domains of the 23S rRNA in the assembled 50S subunit and ribosome (By similarity).</text>
</comment>
<comment type="function">
    <text evidence="1">The globular domain of the protein is located near the polypeptide exit tunnel on the outside of the subunit, while an extended beta-hairpin is found that lines the wall of the exit tunnel in the center of the 70S ribosome.</text>
</comment>
<comment type="subunit">
    <text evidence="1">Part of the 50S ribosomal subunit.</text>
</comment>
<comment type="similarity">
    <text evidence="1">Belongs to the universal ribosomal protein uL22 family.</text>
</comment>